<accession>A9R307</accession>
<dbReference type="EC" id="3.1.-.-" evidence="1"/>
<dbReference type="EMBL" id="CP000901">
    <property type="protein sequence ID" value="ABX88456.1"/>
    <property type="molecule type" value="Genomic_DNA"/>
</dbReference>
<dbReference type="SMR" id="A9R307"/>
<dbReference type="KEGG" id="ypg:YpAngola_A3340"/>
<dbReference type="PATRIC" id="fig|349746.12.peg.39"/>
<dbReference type="GO" id="GO:0005829">
    <property type="term" value="C:cytosol"/>
    <property type="evidence" value="ECO:0007669"/>
    <property type="project" value="TreeGrafter"/>
</dbReference>
<dbReference type="GO" id="GO:0004518">
    <property type="term" value="F:nuclease activity"/>
    <property type="evidence" value="ECO:0007669"/>
    <property type="project" value="UniProtKB-KW"/>
</dbReference>
<dbReference type="GO" id="GO:0000967">
    <property type="term" value="P:rRNA 5'-end processing"/>
    <property type="evidence" value="ECO:0007669"/>
    <property type="project" value="UniProtKB-UniRule"/>
</dbReference>
<dbReference type="CDD" id="cd16964">
    <property type="entry name" value="YqgF"/>
    <property type="match status" value="1"/>
</dbReference>
<dbReference type="FunFam" id="3.30.420.140:FF:000002">
    <property type="entry name" value="Putative pre-16S rRNA nuclease"/>
    <property type="match status" value="1"/>
</dbReference>
<dbReference type="Gene3D" id="3.30.420.140">
    <property type="entry name" value="YqgF/RNase H-like domain"/>
    <property type="match status" value="1"/>
</dbReference>
<dbReference type="HAMAP" id="MF_00651">
    <property type="entry name" value="Nuclease_YqgF"/>
    <property type="match status" value="1"/>
</dbReference>
<dbReference type="InterPro" id="IPR012337">
    <property type="entry name" value="RNaseH-like_sf"/>
</dbReference>
<dbReference type="InterPro" id="IPR005227">
    <property type="entry name" value="YqgF"/>
</dbReference>
<dbReference type="InterPro" id="IPR006641">
    <property type="entry name" value="YqgF/RNaseH-like_dom"/>
</dbReference>
<dbReference type="InterPro" id="IPR037027">
    <property type="entry name" value="YqgF/RNaseH-like_dom_sf"/>
</dbReference>
<dbReference type="NCBIfam" id="TIGR00250">
    <property type="entry name" value="RNAse_H_YqgF"/>
    <property type="match status" value="1"/>
</dbReference>
<dbReference type="PANTHER" id="PTHR33317">
    <property type="entry name" value="POLYNUCLEOTIDYL TRANSFERASE, RIBONUCLEASE H-LIKE SUPERFAMILY PROTEIN"/>
    <property type="match status" value="1"/>
</dbReference>
<dbReference type="PANTHER" id="PTHR33317:SF4">
    <property type="entry name" value="POLYNUCLEOTIDYL TRANSFERASE, RIBONUCLEASE H-LIKE SUPERFAMILY PROTEIN"/>
    <property type="match status" value="1"/>
</dbReference>
<dbReference type="Pfam" id="PF03652">
    <property type="entry name" value="RuvX"/>
    <property type="match status" value="1"/>
</dbReference>
<dbReference type="SMART" id="SM00732">
    <property type="entry name" value="YqgFc"/>
    <property type="match status" value="1"/>
</dbReference>
<dbReference type="SUPFAM" id="SSF53098">
    <property type="entry name" value="Ribonuclease H-like"/>
    <property type="match status" value="1"/>
</dbReference>
<reference key="1">
    <citation type="journal article" date="2010" name="J. Bacteriol.">
        <title>Genome sequence of the deep-rooted Yersinia pestis strain Angola reveals new insights into the evolution and pangenome of the plague bacterium.</title>
        <authorList>
            <person name="Eppinger M."/>
            <person name="Worsham P.L."/>
            <person name="Nikolich M.P."/>
            <person name="Riley D.R."/>
            <person name="Sebastian Y."/>
            <person name="Mou S."/>
            <person name="Achtman M."/>
            <person name="Lindler L.E."/>
            <person name="Ravel J."/>
        </authorList>
    </citation>
    <scope>NUCLEOTIDE SEQUENCE [LARGE SCALE GENOMIC DNA]</scope>
    <source>
        <strain>Angola</strain>
    </source>
</reference>
<feature type="chain" id="PRO_1000131091" description="Putative pre-16S rRNA nuclease">
    <location>
        <begin position="1"/>
        <end position="140"/>
    </location>
</feature>
<protein>
    <recommendedName>
        <fullName evidence="1">Putative pre-16S rRNA nuclease</fullName>
        <ecNumber evidence="1">3.1.-.-</ecNumber>
    </recommendedName>
</protein>
<organism>
    <name type="scientific">Yersinia pestis bv. Antiqua (strain Angola)</name>
    <dbReference type="NCBI Taxonomy" id="349746"/>
    <lineage>
        <taxon>Bacteria</taxon>
        <taxon>Pseudomonadati</taxon>
        <taxon>Pseudomonadota</taxon>
        <taxon>Gammaproteobacteria</taxon>
        <taxon>Enterobacterales</taxon>
        <taxon>Yersiniaceae</taxon>
        <taxon>Yersinia</taxon>
    </lineage>
</organism>
<name>YQGF_YERPG</name>
<proteinExistence type="inferred from homology"/>
<gene>
    <name evidence="1" type="primary">yqgF</name>
    <name type="ordered locus">YpAngola_A3340</name>
</gene>
<sequence>MANRTIIAFDFGTKSIGVAIGQEVTGTARALTAFKAQDGTPDWQQVEKLLKEWQPNLVVVGLPLNMDGTEQPLTARARRFANRLHGRFGVQVALQDERLSTVEARANLFDRGGYRALDKGSVDAASAVIILESWFDEQAG</sequence>
<evidence type="ECO:0000255" key="1">
    <source>
        <dbReference type="HAMAP-Rule" id="MF_00651"/>
    </source>
</evidence>
<comment type="function">
    <text evidence="1">Could be a nuclease involved in processing of the 5'-end of pre-16S rRNA.</text>
</comment>
<comment type="subcellular location">
    <subcellularLocation>
        <location evidence="1">Cytoplasm</location>
    </subcellularLocation>
</comment>
<comment type="similarity">
    <text evidence="1">Belongs to the YqgF nuclease family.</text>
</comment>
<keyword id="KW-0963">Cytoplasm</keyword>
<keyword id="KW-0378">Hydrolase</keyword>
<keyword id="KW-0540">Nuclease</keyword>
<keyword id="KW-0690">Ribosome biogenesis</keyword>